<organismHost>
    <name type="scientific">Orgyia pseudotsugata</name>
    <name type="common">Douglas-fir tussock moth</name>
    <dbReference type="NCBI Taxonomy" id="33414"/>
</organismHost>
<evidence type="ECO:0000256" key="1">
    <source>
        <dbReference type="SAM" id="MobiDB-lite"/>
    </source>
</evidence>
<sequence>MLPEKLHNLPHNGKRIFYKFYDRSLRKFGSREVAVKLAVCAVRKKYTLVRGQWRARPDANDADTTSSSSSSETCTESDDSSDVPPARYAV</sequence>
<protein>
    <recommendedName>
        <fullName>Uncharacterized 10.2 kDa protein</fullName>
    </recommendedName>
</protein>
<reference key="1">
    <citation type="journal article" date="1997" name="Virology">
        <title>The sequence of the Orgyia pseudotsugata multinucleocapsid nuclear polyhedrosis virus genome.</title>
        <authorList>
            <person name="Ahrens C.H."/>
            <person name="Russell R.R."/>
            <person name="Funk C.J."/>
            <person name="Evans J."/>
            <person name="Harwood S."/>
            <person name="Rohrmann G.F."/>
        </authorList>
    </citation>
    <scope>NUCLEOTIDE SEQUENCE [LARGE SCALE GENOMIC DNA]</scope>
</reference>
<name>Y060_NPVOP</name>
<organism>
    <name type="scientific">Orgyia pseudotsugata multicapsid polyhedrosis virus</name>
    <name type="common">OpMNPV</name>
    <dbReference type="NCBI Taxonomy" id="262177"/>
    <lineage>
        <taxon>Viruses</taxon>
        <taxon>Viruses incertae sedis</taxon>
        <taxon>Naldaviricetes</taxon>
        <taxon>Lefavirales</taxon>
        <taxon>Baculoviridae</taxon>
        <taxon>Alphabaculovirus</taxon>
        <taxon>Alphabaculovirus orpseudotsugatae</taxon>
    </lineage>
</organism>
<accession>O10317</accession>
<dbReference type="EMBL" id="U75930">
    <property type="protein sequence ID" value="AAC59062.1"/>
    <property type="molecule type" value="Genomic_DNA"/>
</dbReference>
<dbReference type="RefSeq" id="NP_046219.1">
    <property type="nucleotide sequence ID" value="NC_001875.2"/>
</dbReference>
<dbReference type="SMR" id="O10317"/>
<dbReference type="KEGG" id="vg:912009"/>
<dbReference type="OrthoDB" id="27883at10239"/>
<dbReference type="Proteomes" id="UP000009248">
    <property type="component" value="Genome"/>
</dbReference>
<dbReference type="Gene3D" id="1.10.1740.70">
    <property type="entry name" value="ChaB"/>
    <property type="match status" value="1"/>
</dbReference>
<dbReference type="InterPro" id="IPR009317">
    <property type="entry name" value="ChaB"/>
</dbReference>
<dbReference type="InterPro" id="IPR037205">
    <property type="entry name" value="ChaB_sf"/>
</dbReference>
<dbReference type="Pfam" id="PF06150">
    <property type="entry name" value="ChaB"/>
    <property type="match status" value="1"/>
</dbReference>
<dbReference type="SUPFAM" id="SSF140376">
    <property type="entry name" value="ChaB-like"/>
    <property type="match status" value="1"/>
</dbReference>
<keyword id="KW-1185">Reference proteome</keyword>
<feature type="chain" id="PRO_0000133000" description="Uncharacterized 10.2 kDa protein">
    <location>
        <begin position="1"/>
        <end position="90"/>
    </location>
</feature>
<feature type="region of interest" description="Disordered" evidence="1">
    <location>
        <begin position="53"/>
        <end position="90"/>
    </location>
</feature>
<feature type="compositionally biased region" description="Low complexity" evidence="1">
    <location>
        <begin position="63"/>
        <end position="74"/>
    </location>
</feature>
<gene>
    <name type="ORF">ORF63</name>
</gene>
<proteinExistence type="predicted"/>